<accession>B5YXM7</accession>
<gene>
    <name evidence="1" type="primary">lolB</name>
    <name type="ordered locus">ECH74115_1690</name>
</gene>
<sequence length="207" mass="23551">MPLPDFRLIRLLPLAALVLTACSVTTPKGPGKSPDSPQWRQHQQDVRNLNQYQTRGAFAYISDQQKVYARFFWQQTGQDRYRLLLTNPLGSTELELNAQPGNVQLVDNKGQRYTADDAEEMIGKLTGMPIPLNSLRQWILGLPGDATDYKLDDQYRLSEITYSQNGKNWKVVYGGYDTKTQPAMPANMELTDGGQRIKLKMDNWIVK</sequence>
<proteinExistence type="inferred from homology"/>
<reference key="1">
    <citation type="journal article" date="2011" name="Proc. Natl. Acad. Sci. U.S.A.">
        <title>Genomic anatomy of Escherichia coli O157:H7 outbreaks.</title>
        <authorList>
            <person name="Eppinger M."/>
            <person name="Mammel M.K."/>
            <person name="Leclerc J.E."/>
            <person name="Ravel J."/>
            <person name="Cebula T.A."/>
        </authorList>
    </citation>
    <scope>NUCLEOTIDE SEQUENCE [LARGE SCALE GENOMIC DNA]</scope>
    <source>
        <strain>EC4115 / EHEC</strain>
    </source>
</reference>
<evidence type="ECO:0000255" key="1">
    <source>
        <dbReference type="HAMAP-Rule" id="MF_00233"/>
    </source>
</evidence>
<keyword id="KW-0998">Cell outer membrane</keyword>
<keyword id="KW-0143">Chaperone</keyword>
<keyword id="KW-0449">Lipoprotein</keyword>
<keyword id="KW-0472">Membrane</keyword>
<keyword id="KW-0564">Palmitate</keyword>
<keyword id="KW-0653">Protein transport</keyword>
<keyword id="KW-0732">Signal</keyword>
<keyword id="KW-0813">Transport</keyword>
<feature type="signal peptide" evidence="1">
    <location>
        <begin position="1"/>
        <end position="21"/>
    </location>
</feature>
<feature type="chain" id="PRO_1000100495" description="Outer-membrane lipoprotein LolB">
    <location>
        <begin position="22"/>
        <end position="207"/>
    </location>
</feature>
<feature type="lipid moiety-binding region" description="N-palmitoyl cysteine" evidence="1">
    <location>
        <position position="22"/>
    </location>
</feature>
<feature type="lipid moiety-binding region" description="S-diacylglycerol cysteine" evidence="1">
    <location>
        <position position="22"/>
    </location>
</feature>
<dbReference type="EMBL" id="CP001164">
    <property type="protein sequence ID" value="ACI35726.1"/>
    <property type="molecule type" value="Genomic_DNA"/>
</dbReference>
<dbReference type="RefSeq" id="WP_001130692.1">
    <property type="nucleotide sequence ID" value="NC_011353.1"/>
</dbReference>
<dbReference type="SMR" id="B5YXM7"/>
<dbReference type="GeneID" id="93775274"/>
<dbReference type="KEGG" id="ecf:ECH74115_1690"/>
<dbReference type="HOGENOM" id="CLU_092816_1_1_6"/>
<dbReference type="GO" id="GO:0009279">
    <property type="term" value="C:cell outer membrane"/>
    <property type="evidence" value="ECO:0007669"/>
    <property type="project" value="UniProtKB-SubCell"/>
</dbReference>
<dbReference type="GO" id="GO:0044874">
    <property type="term" value="P:lipoprotein localization to outer membrane"/>
    <property type="evidence" value="ECO:0007669"/>
    <property type="project" value="UniProtKB-UniRule"/>
</dbReference>
<dbReference type="GO" id="GO:0015031">
    <property type="term" value="P:protein transport"/>
    <property type="evidence" value="ECO:0007669"/>
    <property type="project" value="UniProtKB-KW"/>
</dbReference>
<dbReference type="CDD" id="cd16326">
    <property type="entry name" value="LolB"/>
    <property type="match status" value="1"/>
</dbReference>
<dbReference type="FunFam" id="2.50.20.10:FF:000002">
    <property type="entry name" value="Outer-membrane lipoprotein LolB"/>
    <property type="match status" value="1"/>
</dbReference>
<dbReference type="Gene3D" id="2.50.20.10">
    <property type="entry name" value="Lipoprotein localisation LolA/LolB/LppX"/>
    <property type="match status" value="1"/>
</dbReference>
<dbReference type="HAMAP" id="MF_00233">
    <property type="entry name" value="LolB"/>
    <property type="match status" value="1"/>
</dbReference>
<dbReference type="InterPro" id="IPR029046">
    <property type="entry name" value="LolA/LolB/LppX"/>
</dbReference>
<dbReference type="InterPro" id="IPR004565">
    <property type="entry name" value="OM_lipoprot_LolB"/>
</dbReference>
<dbReference type="NCBIfam" id="TIGR00548">
    <property type="entry name" value="lolB"/>
    <property type="match status" value="1"/>
</dbReference>
<dbReference type="Pfam" id="PF03550">
    <property type="entry name" value="LolB"/>
    <property type="match status" value="1"/>
</dbReference>
<dbReference type="SUPFAM" id="SSF89392">
    <property type="entry name" value="Prokaryotic lipoproteins and lipoprotein localization factors"/>
    <property type="match status" value="1"/>
</dbReference>
<dbReference type="PROSITE" id="PS51257">
    <property type="entry name" value="PROKAR_LIPOPROTEIN"/>
    <property type="match status" value="1"/>
</dbReference>
<protein>
    <recommendedName>
        <fullName evidence="1">Outer-membrane lipoprotein LolB</fullName>
    </recommendedName>
</protein>
<name>LOLB_ECO5E</name>
<comment type="function">
    <text evidence="1">Plays a critical role in the incorporation of lipoproteins in the outer membrane after they are released by the LolA protein.</text>
</comment>
<comment type="subunit">
    <text evidence="1">Monomer.</text>
</comment>
<comment type="subcellular location">
    <subcellularLocation>
        <location evidence="1">Cell outer membrane</location>
        <topology evidence="1">Lipid-anchor</topology>
    </subcellularLocation>
</comment>
<comment type="similarity">
    <text evidence="1">Belongs to the LolB family.</text>
</comment>
<organism>
    <name type="scientific">Escherichia coli O157:H7 (strain EC4115 / EHEC)</name>
    <dbReference type="NCBI Taxonomy" id="444450"/>
    <lineage>
        <taxon>Bacteria</taxon>
        <taxon>Pseudomonadati</taxon>
        <taxon>Pseudomonadota</taxon>
        <taxon>Gammaproteobacteria</taxon>
        <taxon>Enterobacterales</taxon>
        <taxon>Enterobacteriaceae</taxon>
        <taxon>Escherichia</taxon>
    </lineage>
</organism>